<reference key="1">
    <citation type="submission" date="2006-10" db="EMBL/GenBank/DDBJ databases">
        <authorList>
            <person name="Fleischmann R.D."/>
            <person name="Dodson R.J."/>
            <person name="Haft D.H."/>
            <person name="Merkel J.S."/>
            <person name="Nelson W.C."/>
            <person name="Fraser C.M."/>
        </authorList>
    </citation>
    <scope>NUCLEOTIDE SEQUENCE [LARGE SCALE GENOMIC DNA]</scope>
    <source>
        <strain>ATCC 700084 / mc(2)155</strain>
    </source>
</reference>
<reference key="2">
    <citation type="journal article" date="2016" name="Biochemistry">
        <title>The Radical S-Adenosyl-L-methionine Enzyme MftC Catalyzes an Oxidative Decarboxylation of the C-Terminus of the MftA Peptide.</title>
        <authorList>
            <person name="Bruender N.A."/>
            <person name="Bandarian V."/>
        </authorList>
    </citation>
    <scope>FUNCTION</scope>
    <scope>CATALYTIC ACTIVITY</scope>
    <scope>COFACTOR</scope>
    <scope>REACTION MECHANISM</scope>
    <source>
        <strain>ATCC 700084 / mc(2)155</strain>
    </source>
</reference>
<reference key="3">
    <citation type="journal article" date="2019" name="MBio">
        <title>Mycofactocin Is Associated with Ethanol Metabolism in Mycobacteria.</title>
        <authorList>
            <person name="Krishnamoorthy G."/>
            <person name="Kaiser P."/>
            <person name="Lozza L."/>
            <person name="Hahnke K."/>
            <person name="Mollenkopf H.J."/>
            <person name="Kaufmann S.H.E."/>
        </authorList>
    </citation>
    <scope>FUNCTION</scope>
    <scope>DISRUPTION PHENOTYPE</scope>
    <source>
        <strain>ATCC 700084 / mc(2)155</strain>
    </source>
</reference>
<reference key="4">
    <citation type="journal article" date="2020" name="Chem. Sci.">
        <title>Structure elucidation of the redox cofactor mycofactocin reveals oligo-glycosylation by MftF.</title>
        <authorList>
            <person name="Pena-Ortiz L."/>
            <person name="Graca A.P."/>
            <person name="Guo H."/>
            <person name="Braga D."/>
            <person name="Koellner T.G."/>
            <person name="Regestein L."/>
            <person name="Beemelmanns C."/>
            <person name="Lackner G."/>
        </authorList>
    </citation>
    <scope>DISRUPTION PHENOTYPE</scope>
    <source>
        <strain>ATCC 700084 / mc(2)155</strain>
    </source>
</reference>
<dbReference type="EC" id="4.1.99.26" evidence="1"/>
<dbReference type="EC" id="1.3.98.7" evidence="4"/>
<dbReference type="EMBL" id="CP000480">
    <property type="protein sequence ID" value="ABK73068.1"/>
    <property type="molecule type" value="Genomic_DNA"/>
</dbReference>
<dbReference type="RefSeq" id="WP_011727659.1">
    <property type="nucleotide sequence ID" value="NZ_SIJM01000016.1"/>
</dbReference>
<dbReference type="RefSeq" id="YP_885806.1">
    <property type="nucleotide sequence ID" value="NC_008596.1"/>
</dbReference>
<dbReference type="SMR" id="A0QSB8"/>
<dbReference type="STRING" id="246196.MSMEG_1423"/>
<dbReference type="PaxDb" id="246196-MSMEI_1388"/>
<dbReference type="GeneID" id="93456267"/>
<dbReference type="KEGG" id="msm:MSMEG_1423"/>
<dbReference type="PATRIC" id="fig|246196.19.peg.1410"/>
<dbReference type="eggNOG" id="COG0535">
    <property type="taxonomic scope" value="Bacteria"/>
</dbReference>
<dbReference type="OrthoDB" id="9782387at2"/>
<dbReference type="BRENDA" id="1.3.98.7">
    <property type="organism ID" value="3512"/>
</dbReference>
<dbReference type="BRENDA" id="4.1.99.26">
    <property type="organism ID" value="3512"/>
</dbReference>
<dbReference type="Proteomes" id="UP000000757">
    <property type="component" value="Chromosome"/>
</dbReference>
<dbReference type="GO" id="GO:0051539">
    <property type="term" value="F:4 iron, 4 sulfur cluster binding"/>
    <property type="evidence" value="ECO:0007669"/>
    <property type="project" value="UniProtKB-KW"/>
</dbReference>
<dbReference type="GO" id="GO:0016829">
    <property type="term" value="F:lyase activity"/>
    <property type="evidence" value="ECO:0007669"/>
    <property type="project" value="UniProtKB-KW"/>
</dbReference>
<dbReference type="GO" id="GO:0046872">
    <property type="term" value="F:metal ion binding"/>
    <property type="evidence" value="ECO:0007669"/>
    <property type="project" value="UniProtKB-KW"/>
</dbReference>
<dbReference type="GO" id="GO:0016491">
    <property type="term" value="F:oxidoreductase activity"/>
    <property type="evidence" value="ECO:0007669"/>
    <property type="project" value="UniProtKB-KW"/>
</dbReference>
<dbReference type="CDD" id="cd01335">
    <property type="entry name" value="Radical_SAM"/>
    <property type="match status" value="1"/>
</dbReference>
<dbReference type="CDD" id="cd21123">
    <property type="entry name" value="SPASM_MftC-like"/>
    <property type="match status" value="1"/>
</dbReference>
<dbReference type="FunFam" id="3.20.20.70:FF:000188">
    <property type="entry name" value="Mycofactocin radical SAM maturase MftC"/>
    <property type="match status" value="1"/>
</dbReference>
<dbReference type="Gene3D" id="3.20.20.70">
    <property type="entry name" value="Aldolase class I"/>
    <property type="match status" value="1"/>
</dbReference>
<dbReference type="InterPro" id="IPR023885">
    <property type="entry name" value="4Fe4S-binding_SPASM_dom"/>
</dbReference>
<dbReference type="InterPro" id="IPR013785">
    <property type="entry name" value="Aldolase_TIM"/>
</dbReference>
<dbReference type="InterPro" id="IPR006638">
    <property type="entry name" value="Elp3/MiaA/NifB-like_rSAM"/>
</dbReference>
<dbReference type="InterPro" id="IPR023913">
    <property type="entry name" value="MftC"/>
</dbReference>
<dbReference type="InterPro" id="IPR017200">
    <property type="entry name" value="PqqE-like"/>
</dbReference>
<dbReference type="InterPro" id="IPR050377">
    <property type="entry name" value="Radical_SAM_PqqE_MftC-like"/>
</dbReference>
<dbReference type="InterPro" id="IPR007197">
    <property type="entry name" value="rSAM"/>
</dbReference>
<dbReference type="NCBIfam" id="TIGR03962">
    <property type="entry name" value="mycofact_rSAM"/>
    <property type="match status" value="1"/>
</dbReference>
<dbReference type="NCBIfam" id="TIGR04085">
    <property type="entry name" value="rSAM_more_4Fe4S"/>
    <property type="match status" value="1"/>
</dbReference>
<dbReference type="PANTHER" id="PTHR11228:SF7">
    <property type="entry name" value="PQQA PEPTIDE CYCLASE"/>
    <property type="match status" value="1"/>
</dbReference>
<dbReference type="PANTHER" id="PTHR11228">
    <property type="entry name" value="RADICAL SAM DOMAIN PROTEIN"/>
    <property type="match status" value="1"/>
</dbReference>
<dbReference type="Pfam" id="PF04055">
    <property type="entry name" value="Radical_SAM"/>
    <property type="match status" value="1"/>
</dbReference>
<dbReference type="Pfam" id="PF13186">
    <property type="entry name" value="SPASM"/>
    <property type="match status" value="1"/>
</dbReference>
<dbReference type="PIRSF" id="PIRSF037420">
    <property type="entry name" value="PQQ_syn_pqqE"/>
    <property type="match status" value="1"/>
</dbReference>
<dbReference type="SFLD" id="SFLDF00316">
    <property type="entry name" value="C-terminal_tyrosine_decarboxyl"/>
    <property type="match status" value="1"/>
</dbReference>
<dbReference type="SFLD" id="SFLDG01216">
    <property type="entry name" value="thioether_bond_formation_requi"/>
    <property type="match status" value="1"/>
</dbReference>
<dbReference type="SMART" id="SM00729">
    <property type="entry name" value="Elp3"/>
    <property type="match status" value="1"/>
</dbReference>
<dbReference type="SUPFAM" id="SSF102114">
    <property type="entry name" value="Radical SAM enzymes"/>
    <property type="match status" value="1"/>
</dbReference>
<dbReference type="PROSITE" id="PS51918">
    <property type="entry name" value="RADICAL_SAM"/>
    <property type="match status" value="1"/>
</dbReference>
<evidence type="ECO:0000250" key="1">
    <source>
        <dbReference type="UniProtKB" id="A0PM49"/>
    </source>
</evidence>
<evidence type="ECO:0000255" key="2">
    <source>
        <dbReference type="PROSITE-ProRule" id="PRU01266"/>
    </source>
</evidence>
<evidence type="ECO:0000256" key="3">
    <source>
        <dbReference type="SAM" id="MobiDB-lite"/>
    </source>
</evidence>
<evidence type="ECO:0000269" key="4">
    <source>
    </source>
</evidence>
<evidence type="ECO:0000269" key="5">
    <source>
    </source>
</evidence>
<evidence type="ECO:0000269" key="6">
    <source>
    </source>
</evidence>
<evidence type="ECO:0000303" key="7">
    <source>
    </source>
</evidence>
<evidence type="ECO:0000305" key="8"/>
<evidence type="ECO:0000305" key="9">
    <source>
    </source>
</evidence>
<evidence type="ECO:0000312" key="10">
    <source>
        <dbReference type="EMBL" id="ABK73068.1"/>
    </source>
</evidence>
<protein>
    <recommendedName>
        <fullName>Mycofactocin maturase MftC</fullName>
    </recommendedName>
    <alternativeName>
        <fullName>[Mycofactocin precursor peptide]-pyrrolidinone derivative synthase</fullName>
        <ecNumber evidence="1">4.1.99.26</ecNumber>
    </alternativeName>
    <alternativeName>
        <fullName>[Mycofactocin precursor peptide]-tyrosine decarboxylase</fullName>
        <ecNumber evidence="4">1.3.98.7</ecNumber>
    </alternativeName>
</protein>
<proteinExistence type="evidence at protein level"/>
<comment type="function">
    <text evidence="1 4 5">Radical S-adenosylmethionine (SAM) enzyme responsible for the first step of the biosynthesis of the enzyme cofactor mycofactocin (MFT). Catalyzes two reactions at the C-terminus of the mycofactocin precursor (the MftA peptide). The first one is the oxidative decarboxylation of the C-terminal L-tyrosine of MftA, forming an unsaturated tyramine moiety (PubMed:27158836). The second reaction is the cross-linking of the tyramine with the penultimate L-valine residue, forming a five-membered lactam ring (By similarity). Its activity requires the presence of the MftB chaperone (PubMed:27158836). Is required for the in vivo ethanol assimilation in M.smegmatis (PubMed:31113891).</text>
</comment>
<comment type="catalytic activity">
    <reaction evidence="4">
        <text>[mycofactocin precursor peptide]-C-terminal glycyl-L-valyl-L-tyrosine + S-adenosyl-L-methionine = [mycofactocin precursor peptide]-C-terminal glycyl-N-{[2-(4-hydroxyphenyl)ethenyl]-3-methylbutanamide} + 5'-deoxyadenosine + L-methionine + CO2</text>
        <dbReference type="Rhea" id="RHEA:65492"/>
        <dbReference type="Rhea" id="RHEA-COMP:16815"/>
        <dbReference type="Rhea" id="RHEA-COMP:16816"/>
        <dbReference type="ChEBI" id="CHEBI:16526"/>
        <dbReference type="ChEBI" id="CHEBI:17319"/>
        <dbReference type="ChEBI" id="CHEBI:57844"/>
        <dbReference type="ChEBI" id="CHEBI:59789"/>
        <dbReference type="ChEBI" id="CHEBI:156515"/>
        <dbReference type="ChEBI" id="CHEBI:156517"/>
        <dbReference type="EC" id="1.3.98.7"/>
    </reaction>
</comment>
<comment type="catalytic activity">
    <reaction evidence="1">
        <text>[mycofactocin precursor peptide]-C-terminal glycyl-N-{[2-(4-hydroxyphenyl)ethenyl]-3-methylbutanamide} + AH2 + S-adenosyl-L-methionine = [mycofactocin precursor peptide]-C-terminal glycyl-N-{5-[(4-hydroxyphenyl)methyl]-4,4-dimethyl-2-oxopyrrolidin-3-yl}acetamide + 5'-deoxyadenosine + L-methionine + A + H(+)</text>
        <dbReference type="Rhea" id="RHEA:65500"/>
        <dbReference type="Rhea" id="RHEA-COMP:16816"/>
        <dbReference type="Rhea" id="RHEA-COMP:16818"/>
        <dbReference type="ChEBI" id="CHEBI:13193"/>
        <dbReference type="ChEBI" id="CHEBI:15378"/>
        <dbReference type="ChEBI" id="CHEBI:17319"/>
        <dbReference type="ChEBI" id="CHEBI:17499"/>
        <dbReference type="ChEBI" id="CHEBI:57844"/>
        <dbReference type="ChEBI" id="CHEBI:59789"/>
        <dbReference type="ChEBI" id="CHEBI:156517"/>
        <dbReference type="ChEBI" id="CHEBI:156518"/>
        <dbReference type="EC" id="4.1.99.26"/>
    </reaction>
</comment>
<comment type="cofactor">
    <cofactor evidence="2 4">
        <name>[4Fe-4S] cluster</name>
        <dbReference type="ChEBI" id="CHEBI:49883"/>
    </cofactor>
    <text evidence="1 9">Binds 3 [4Fe-4S] clusters. One cluster is coordinated with 3 cysteines and an exchangeable S-adenosyl-L-methionine (Probable). All three [Fe-S] clusters are required for MftC modification of MftA (By similarity).</text>
</comment>
<comment type="disruption phenotype">
    <text evidence="5 6">Cells lacking this gene lose the ability to utilize ethanol as the sole growth substrate (PubMed:31113891). Glycosylated mycofactocins are not detected in this mutant (PubMed:33014324).</text>
</comment>
<comment type="similarity">
    <text evidence="8">Belongs to the radical SAM superfamily. MftC family.</text>
</comment>
<sequence length="392" mass="42378">MTSVQPVPRLVEQFERGLDAPICLTWELTYACNLACVHCLSSSGKRDPRELSTQQCKDIIDELERMQVFYVNIGGGEPTVRSDFWELVDYATAHHVGVKFSTNGVRITPEVAAKLAASDYVDVQISLDGANAEVNDAVRGKGSFDMAVRALENLSNAGFTDAKISVVVTRQNVDQLDEFAALAARYGATLRITRLRPSGRGADVWDDLHPTAEQQRQLYDWLVAKGDRVLTGDSFFHLSGLGAPGALAGLNLCGAGRVVCLIDPVGDVYACPFAIHDKFLAGNILSDGGFQNVWQHSELFRELREPQSAGACASCGHFDACRGGCMAAKFFTGLPLDGPDPECVEGWGAPALEKERVKPKPSGDHSRGTKQGPVALKLLTKPPARFCNESPV</sequence>
<name>MFTC_MYCS2</name>
<accession>A0QSB8</accession>
<gene>
    <name evidence="7" type="primary">mftC</name>
    <name evidence="10" type="ordered locus">MSMEG_1423</name>
</gene>
<keyword id="KW-0004">4Fe-4S</keyword>
<keyword id="KW-0408">Iron</keyword>
<keyword id="KW-0411">Iron-sulfur</keyword>
<keyword id="KW-0456">Lyase</keyword>
<keyword id="KW-0479">Metal-binding</keyword>
<keyword id="KW-0560">Oxidoreductase</keyword>
<keyword id="KW-1185">Reference proteome</keyword>
<keyword id="KW-0949">S-adenosyl-L-methionine</keyword>
<organism>
    <name type="scientific">Mycolicibacterium smegmatis (strain ATCC 700084 / mc(2)155)</name>
    <name type="common">Mycobacterium smegmatis</name>
    <dbReference type="NCBI Taxonomy" id="246196"/>
    <lineage>
        <taxon>Bacteria</taxon>
        <taxon>Bacillati</taxon>
        <taxon>Actinomycetota</taxon>
        <taxon>Actinomycetes</taxon>
        <taxon>Mycobacteriales</taxon>
        <taxon>Mycobacteriaceae</taxon>
        <taxon>Mycolicibacterium</taxon>
    </lineage>
</organism>
<feature type="chain" id="PRO_0000452060" description="Mycofactocin maturase MftC">
    <location>
        <begin position="1"/>
        <end position="392"/>
    </location>
</feature>
<feature type="domain" description="Radical SAM core" evidence="2">
    <location>
        <begin position="18"/>
        <end position="228"/>
    </location>
</feature>
<feature type="region of interest" description="Disordered" evidence="3">
    <location>
        <begin position="354"/>
        <end position="377"/>
    </location>
</feature>
<feature type="compositionally biased region" description="Basic and acidic residues" evidence="3">
    <location>
        <begin position="354"/>
        <end position="367"/>
    </location>
</feature>
<feature type="binding site" evidence="1">
    <location>
        <position position="32"/>
    </location>
    <ligand>
        <name>[4Fe-4S] cluster</name>
        <dbReference type="ChEBI" id="CHEBI:49883"/>
        <label>1</label>
        <note>4Fe-4S-S-AdoMet</note>
    </ligand>
</feature>
<feature type="binding site" evidence="1">
    <location>
        <position position="36"/>
    </location>
    <ligand>
        <name>[4Fe-4S] cluster</name>
        <dbReference type="ChEBI" id="CHEBI:49883"/>
        <label>1</label>
        <note>4Fe-4S-S-AdoMet</note>
    </ligand>
</feature>
<feature type="binding site" evidence="1">
    <location>
        <position position="39"/>
    </location>
    <ligand>
        <name>[4Fe-4S] cluster</name>
        <dbReference type="ChEBI" id="CHEBI:49883"/>
        <label>1</label>
        <note>4Fe-4S-S-AdoMet</note>
    </ligand>
</feature>
<feature type="binding site" evidence="1">
    <location>
        <position position="253"/>
    </location>
    <ligand>
        <name>[4Fe-4S] cluster</name>
        <dbReference type="ChEBI" id="CHEBI:49883"/>
        <label>2</label>
    </ligand>
</feature>
<feature type="binding site" evidence="1">
    <location>
        <position position="260"/>
    </location>
    <ligand>
        <name>[4Fe-4S] cluster</name>
        <dbReference type="ChEBI" id="CHEBI:49883"/>
        <label>2</label>
    </ligand>
</feature>
<feature type="binding site" evidence="1">
    <location>
        <position position="271"/>
    </location>
    <ligand>
        <name>[4Fe-4S] cluster</name>
        <dbReference type="ChEBI" id="CHEBI:49883"/>
        <label>2</label>
    </ligand>
</feature>
<feature type="binding site" evidence="1">
    <location>
        <position position="312"/>
    </location>
    <ligand>
        <name>[4Fe-4S] cluster</name>
        <dbReference type="ChEBI" id="CHEBI:49883"/>
        <label>3</label>
    </ligand>
</feature>
<feature type="binding site" evidence="1">
    <location>
        <position position="315"/>
    </location>
    <ligand>
        <name>[4Fe-4S] cluster</name>
        <dbReference type="ChEBI" id="CHEBI:49883"/>
        <label>3</label>
    </ligand>
</feature>
<feature type="binding site" evidence="1">
    <location>
        <position position="321"/>
    </location>
    <ligand>
        <name>[4Fe-4S] cluster</name>
        <dbReference type="ChEBI" id="CHEBI:49883"/>
        <label>3</label>
    </ligand>
</feature>
<feature type="binding site" evidence="1">
    <location>
        <position position="325"/>
    </location>
    <ligand>
        <name>[4Fe-4S] cluster</name>
        <dbReference type="ChEBI" id="CHEBI:49883"/>
        <label>2</label>
    </ligand>
</feature>
<feature type="binding site" evidence="1">
    <location>
        <position position="343"/>
    </location>
    <ligand>
        <name>[4Fe-4S] cluster</name>
        <dbReference type="ChEBI" id="CHEBI:49883"/>
        <label>3</label>
    </ligand>
</feature>